<protein>
    <recommendedName>
        <fullName>2-dehydro-3-deoxy-D-gluconate 5-dehydrogenase</fullName>
        <ecNumber>1.1.1.127</ecNumber>
    </recommendedName>
    <alternativeName>
        <fullName>2-keto-3-deoxygluconate 5-dehydrogenase</fullName>
    </alternativeName>
    <alternativeName>
        <fullName>2-keto-3-deoxygluconate oxidoreductase</fullName>
        <shortName>KDG oxidoreductase</shortName>
    </alternativeName>
</protein>
<accession>P50842</accession>
<reference key="1">
    <citation type="journal article" date="1996" name="Microbiology">
        <title>Sequence analysis of the Bacillus subtilis chromosome region between the serA and kdg loci cloned in a yeast artificial chromosome.</title>
        <authorList>
            <person name="Sorokin A.V."/>
            <person name="Azevedo V."/>
            <person name="Zumstein E."/>
            <person name="Galleron N."/>
            <person name="Ehrlich S.D."/>
            <person name="Serror P."/>
        </authorList>
    </citation>
    <scope>NUCLEOTIDE SEQUENCE [GENOMIC DNA]</scope>
    <source>
        <strain>168 / Marburg / ATCC 6051 / DSM 10 / JCM 1465 / NBRC 13719 / NCIMB 3610 / NRRL NRS-744 / VKM B-501</strain>
    </source>
</reference>
<reference key="2">
    <citation type="journal article" date="1997" name="Nature">
        <title>The complete genome sequence of the Gram-positive bacterium Bacillus subtilis.</title>
        <authorList>
            <person name="Kunst F."/>
            <person name="Ogasawara N."/>
            <person name="Moszer I."/>
            <person name="Albertini A.M."/>
            <person name="Alloni G."/>
            <person name="Azevedo V."/>
            <person name="Bertero M.G."/>
            <person name="Bessieres P."/>
            <person name="Bolotin A."/>
            <person name="Borchert S."/>
            <person name="Borriss R."/>
            <person name="Boursier L."/>
            <person name="Brans A."/>
            <person name="Braun M."/>
            <person name="Brignell S.C."/>
            <person name="Bron S."/>
            <person name="Brouillet S."/>
            <person name="Bruschi C.V."/>
            <person name="Caldwell B."/>
            <person name="Capuano V."/>
            <person name="Carter N.M."/>
            <person name="Choi S.-K."/>
            <person name="Codani J.-J."/>
            <person name="Connerton I.F."/>
            <person name="Cummings N.J."/>
            <person name="Daniel R.A."/>
            <person name="Denizot F."/>
            <person name="Devine K.M."/>
            <person name="Duesterhoeft A."/>
            <person name="Ehrlich S.D."/>
            <person name="Emmerson P.T."/>
            <person name="Entian K.-D."/>
            <person name="Errington J."/>
            <person name="Fabret C."/>
            <person name="Ferrari E."/>
            <person name="Foulger D."/>
            <person name="Fritz C."/>
            <person name="Fujita M."/>
            <person name="Fujita Y."/>
            <person name="Fuma S."/>
            <person name="Galizzi A."/>
            <person name="Galleron N."/>
            <person name="Ghim S.-Y."/>
            <person name="Glaser P."/>
            <person name="Goffeau A."/>
            <person name="Golightly E.J."/>
            <person name="Grandi G."/>
            <person name="Guiseppi G."/>
            <person name="Guy B.J."/>
            <person name="Haga K."/>
            <person name="Haiech J."/>
            <person name="Harwood C.R."/>
            <person name="Henaut A."/>
            <person name="Hilbert H."/>
            <person name="Holsappel S."/>
            <person name="Hosono S."/>
            <person name="Hullo M.-F."/>
            <person name="Itaya M."/>
            <person name="Jones L.-M."/>
            <person name="Joris B."/>
            <person name="Karamata D."/>
            <person name="Kasahara Y."/>
            <person name="Klaerr-Blanchard M."/>
            <person name="Klein C."/>
            <person name="Kobayashi Y."/>
            <person name="Koetter P."/>
            <person name="Koningstein G."/>
            <person name="Krogh S."/>
            <person name="Kumano M."/>
            <person name="Kurita K."/>
            <person name="Lapidus A."/>
            <person name="Lardinois S."/>
            <person name="Lauber J."/>
            <person name="Lazarevic V."/>
            <person name="Lee S.-M."/>
            <person name="Levine A."/>
            <person name="Liu H."/>
            <person name="Masuda S."/>
            <person name="Mauel C."/>
            <person name="Medigue C."/>
            <person name="Medina N."/>
            <person name="Mellado R.P."/>
            <person name="Mizuno M."/>
            <person name="Moestl D."/>
            <person name="Nakai S."/>
            <person name="Noback M."/>
            <person name="Noone D."/>
            <person name="O'Reilly M."/>
            <person name="Ogawa K."/>
            <person name="Ogiwara A."/>
            <person name="Oudega B."/>
            <person name="Park S.-H."/>
            <person name="Parro V."/>
            <person name="Pohl T.M."/>
            <person name="Portetelle D."/>
            <person name="Porwollik S."/>
            <person name="Prescott A.M."/>
            <person name="Presecan E."/>
            <person name="Pujic P."/>
            <person name="Purnelle B."/>
            <person name="Rapoport G."/>
            <person name="Rey M."/>
            <person name="Reynolds S."/>
            <person name="Rieger M."/>
            <person name="Rivolta C."/>
            <person name="Rocha E."/>
            <person name="Roche B."/>
            <person name="Rose M."/>
            <person name="Sadaie Y."/>
            <person name="Sato T."/>
            <person name="Scanlan E."/>
            <person name="Schleich S."/>
            <person name="Schroeter R."/>
            <person name="Scoffone F."/>
            <person name="Sekiguchi J."/>
            <person name="Sekowska A."/>
            <person name="Seror S.J."/>
            <person name="Serror P."/>
            <person name="Shin B.-S."/>
            <person name="Soldo B."/>
            <person name="Sorokin A."/>
            <person name="Tacconi E."/>
            <person name="Takagi T."/>
            <person name="Takahashi H."/>
            <person name="Takemaru K."/>
            <person name="Takeuchi M."/>
            <person name="Tamakoshi A."/>
            <person name="Tanaka T."/>
            <person name="Terpstra P."/>
            <person name="Tognoni A."/>
            <person name="Tosato V."/>
            <person name="Uchiyama S."/>
            <person name="Vandenbol M."/>
            <person name="Vannier F."/>
            <person name="Vassarotti A."/>
            <person name="Viari A."/>
            <person name="Wambutt R."/>
            <person name="Wedler E."/>
            <person name="Wedler H."/>
            <person name="Weitzenegger T."/>
            <person name="Winters P."/>
            <person name="Wipat A."/>
            <person name="Yamamoto H."/>
            <person name="Yamane K."/>
            <person name="Yasumoto K."/>
            <person name="Yata K."/>
            <person name="Yoshida K."/>
            <person name="Yoshikawa H.-F."/>
            <person name="Zumstein E."/>
            <person name="Yoshikawa H."/>
            <person name="Danchin A."/>
        </authorList>
    </citation>
    <scope>NUCLEOTIDE SEQUENCE [LARGE SCALE GENOMIC DNA]</scope>
    <source>
        <strain>168</strain>
    </source>
</reference>
<reference key="3">
    <citation type="journal article" date="2007" name="Microbiology">
        <title>Regulation of the kduID operon of Bacillus subtilis by the KdgR repressor and the ccpA gene: identification of two KdgR-binding sites within the kdgR-kduI intergenic region.</title>
        <authorList>
            <person name="Lin J.S."/>
            <person name="Shaw G.C."/>
        </authorList>
    </citation>
    <scope>INDUCTION</scope>
    <source>
        <strain>168</strain>
    </source>
</reference>
<evidence type="ECO:0000250" key="1"/>
<evidence type="ECO:0000255" key="2">
    <source>
        <dbReference type="PROSITE-ProRule" id="PRU10001"/>
    </source>
</evidence>
<evidence type="ECO:0000269" key="3">
    <source>
    </source>
</evidence>
<evidence type="ECO:0000305" key="4"/>
<dbReference type="EC" id="1.1.1.127"/>
<dbReference type="EMBL" id="L47838">
    <property type="protein sequence ID" value="AAB38476.1"/>
    <property type="molecule type" value="Genomic_DNA"/>
</dbReference>
<dbReference type="EMBL" id="AL009126">
    <property type="protein sequence ID" value="CAB14131.1"/>
    <property type="molecule type" value="Genomic_DNA"/>
</dbReference>
<dbReference type="PIR" id="D69648">
    <property type="entry name" value="D69648"/>
</dbReference>
<dbReference type="RefSeq" id="NP_390096.1">
    <property type="nucleotide sequence ID" value="NC_000964.3"/>
</dbReference>
<dbReference type="RefSeq" id="WP_003230720.1">
    <property type="nucleotide sequence ID" value="NZ_OZ025638.1"/>
</dbReference>
<dbReference type="SMR" id="P50842"/>
<dbReference type="FunCoup" id="P50842">
    <property type="interactions" value="116"/>
</dbReference>
<dbReference type="STRING" id="224308.BSU22140"/>
<dbReference type="jPOST" id="P50842"/>
<dbReference type="PaxDb" id="224308-BSU22140"/>
<dbReference type="EnsemblBacteria" id="CAB14131">
    <property type="protein sequence ID" value="CAB14131"/>
    <property type="gene ID" value="BSU_22140"/>
</dbReference>
<dbReference type="GeneID" id="939059"/>
<dbReference type="KEGG" id="bsu:BSU22140"/>
<dbReference type="PATRIC" id="fig|224308.179.peg.2418"/>
<dbReference type="eggNOG" id="COG1028">
    <property type="taxonomic scope" value="Bacteria"/>
</dbReference>
<dbReference type="InParanoid" id="P50842"/>
<dbReference type="OrthoDB" id="9803333at2"/>
<dbReference type="PhylomeDB" id="P50842"/>
<dbReference type="BioCyc" id="BSUB:BSU22140-MONOMER"/>
<dbReference type="UniPathway" id="UPA00545">
    <property type="reaction ID" value="UER00827"/>
</dbReference>
<dbReference type="Proteomes" id="UP000001570">
    <property type="component" value="Chromosome"/>
</dbReference>
<dbReference type="GO" id="GO:0047001">
    <property type="term" value="F:2-dehydro-3-deoxy-D-gluconate 5-dehydrogenase activity"/>
    <property type="evidence" value="ECO:0007669"/>
    <property type="project" value="UniProtKB-EC"/>
</dbReference>
<dbReference type="GO" id="GO:0008678">
    <property type="term" value="F:2-deoxy-D-gluconate 3-dehydrogenase activity"/>
    <property type="evidence" value="ECO:0007669"/>
    <property type="project" value="InterPro"/>
</dbReference>
<dbReference type="GO" id="GO:0051287">
    <property type="term" value="F:NAD binding"/>
    <property type="evidence" value="ECO:0007669"/>
    <property type="project" value="InterPro"/>
</dbReference>
<dbReference type="GO" id="GO:0016616">
    <property type="term" value="F:oxidoreductase activity, acting on the CH-OH group of donors, NAD or NADP as acceptor"/>
    <property type="evidence" value="ECO:0000318"/>
    <property type="project" value="GO_Central"/>
</dbReference>
<dbReference type="GO" id="GO:0045490">
    <property type="term" value="P:pectin catabolic process"/>
    <property type="evidence" value="ECO:0007669"/>
    <property type="project" value="UniProtKB-UniPathway"/>
</dbReference>
<dbReference type="CDD" id="cd05347">
    <property type="entry name" value="Ga5DH-like_SDR_c"/>
    <property type="match status" value="1"/>
</dbReference>
<dbReference type="FunFam" id="3.40.50.720:FF:000081">
    <property type="entry name" value="2-deoxy-D-gluconate 3-dehydrogenase"/>
    <property type="match status" value="1"/>
</dbReference>
<dbReference type="Gene3D" id="3.40.50.720">
    <property type="entry name" value="NAD(P)-binding Rossmann-like Domain"/>
    <property type="match status" value="1"/>
</dbReference>
<dbReference type="InterPro" id="IPR011286">
    <property type="entry name" value="2-deoxy-D-gluc_3_DH"/>
</dbReference>
<dbReference type="InterPro" id="IPR036291">
    <property type="entry name" value="NAD(P)-bd_dom_sf"/>
</dbReference>
<dbReference type="InterPro" id="IPR020904">
    <property type="entry name" value="Sc_DH/Rdtase_CS"/>
</dbReference>
<dbReference type="InterPro" id="IPR002347">
    <property type="entry name" value="SDR_fam"/>
</dbReference>
<dbReference type="NCBIfam" id="TIGR01832">
    <property type="entry name" value="kduD"/>
    <property type="match status" value="1"/>
</dbReference>
<dbReference type="NCBIfam" id="NF005390">
    <property type="entry name" value="PRK06935.1"/>
    <property type="match status" value="1"/>
</dbReference>
<dbReference type="PANTHER" id="PTHR42760:SF5">
    <property type="entry name" value="2-DEHYDRO-3-DEOXY-D-GLUCONATE 5-DEHYDROGENASE"/>
    <property type="match status" value="1"/>
</dbReference>
<dbReference type="PANTHER" id="PTHR42760">
    <property type="entry name" value="SHORT-CHAIN DEHYDROGENASES/REDUCTASES FAMILY MEMBER"/>
    <property type="match status" value="1"/>
</dbReference>
<dbReference type="Pfam" id="PF13561">
    <property type="entry name" value="adh_short_C2"/>
    <property type="match status" value="1"/>
</dbReference>
<dbReference type="PRINTS" id="PR00081">
    <property type="entry name" value="GDHRDH"/>
</dbReference>
<dbReference type="PRINTS" id="PR00080">
    <property type="entry name" value="SDRFAMILY"/>
</dbReference>
<dbReference type="SUPFAM" id="SSF51735">
    <property type="entry name" value="NAD(P)-binding Rossmann-fold domains"/>
    <property type="match status" value="1"/>
</dbReference>
<dbReference type="PROSITE" id="PS00061">
    <property type="entry name" value="ADH_SHORT"/>
    <property type="match status" value="1"/>
</dbReference>
<proteinExistence type="evidence at transcript level"/>
<sequence length="254" mass="27186">MGYLHDAFSLKGKTALVTGPGTGIGQGIAKALAGAGADIIGTSHTSSLSETQQLVEQEGRIFTSFTLDMSKPEAIKDSAAELFENRQIDILVNNAGIIHREKAEDFPEENWQHVLNVNLNSLFILTQLAGRHMLKRGHGKIINIASLLSFQGGILVPAYTASKHAVAGLTKSFANEWAASGIQVNAIAPGYISTANTKPIRDDEKRNEDILKRIPAGRWGQADDIGGTAVFLASRASDYVNGHILAVDGGWLSR</sequence>
<keyword id="KW-0520">NAD</keyword>
<keyword id="KW-0560">Oxidoreductase</keyword>
<keyword id="KW-1185">Reference proteome</keyword>
<comment type="function">
    <text evidence="1">Catalyzes the reduction of 2,5-diketo-3-deoxygluconate (DKII or 4,6-dihydroxy-2,5-dioxohexanoate) into 2-keto-3-deoxygluconate (KDG or 2-dehydro-3-deoxygluconate) with a concomitant oxidation of NADH.</text>
</comment>
<comment type="catalytic activity">
    <reaction>
        <text>2-dehydro-3-deoxy-D-gluconate + NAD(+) = 3-deoxy-D-glycero-2,5-hexodiulosonate + NADH + H(+)</text>
        <dbReference type="Rhea" id="RHEA:24232"/>
        <dbReference type="ChEBI" id="CHEBI:15378"/>
        <dbReference type="ChEBI" id="CHEBI:29071"/>
        <dbReference type="ChEBI" id="CHEBI:57540"/>
        <dbReference type="ChEBI" id="CHEBI:57945"/>
        <dbReference type="ChEBI" id="CHEBI:57990"/>
        <dbReference type="EC" id="1.1.1.127"/>
    </reaction>
</comment>
<comment type="pathway">
    <text>Glycan metabolism; pectin degradation; 2-dehydro-3-deoxy-D-gluconate from pectin: step 5/5.</text>
</comment>
<comment type="induction">
    <text evidence="3">Induced by galacturonate and negatively regulated by the KdgR repressor. Is subject to catabolite repression by glucose involving the ccpA gene.</text>
</comment>
<comment type="similarity">
    <text evidence="4">Belongs to the short-chain dehydrogenases/reductases (SDR) family.</text>
</comment>
<name>KDUD_BACSU</name>
<feature type="chain" id="PRO_0000054714" description="2-dehydro-3-deoxy-D-gluconate 5-dehydrogenase">
    <location>
        <begin position="1"/>
        <end position="254"/>
    </location>
</feature>
<feature type="active site" description="Proton acceptor" evidence="2">
    <location>
        <position position="159"/>
    </location>
</feature>
<feature type="binding site" evidence="1">
    <location>
        <begin position="16"/>
        <end position="40"/>
    </location>
    <ligand>
        <name>NAD(+)</name>
        <dbReference type="ChEBI" id="CHEBI:57540"/>
    </ligand>
</feature>
<feature type="binding site" evidence="1">
    <location>
        <position position="146"/>
    </location>
    <ligand>
        <name>substrate</name>
    </ligand>
</feature>
<gene>
    <name type="primary">kduD</name>
    <name type="ordered locus">BSU22140</name>
</gene>
<organism>
    <name type="scientific">Bacillus subtilis (strain 168)</name>
    <dbReference type="NCBI Taxonomy" id="224308"/>
    <lineage>
        <taxon>Bacteria</taxon>
        <taxon>Bacillati</taxon>
        <taxon>Bacillota</taxon>
        <taxon>Bacilli</taxon>
        <taxon>Bacillales</taxon>
        <taxon>Bacillaceae</taxon>
        <taxon>Bacillus</taxon>
    </lineage>
</organism>